<feature type="chain" id="PRO_0000162019" description="Uncharacterized RNA methyltransferase SAS1819">
    <location>
        <begin position="1"/>
        <end position="453"/>
    </location>
</feature>
<feature type="active site" description="Nucleophile" evidence="2">
    <location>
        <position position="411"/>
    </location>
</feature>
<feature type="binding site" evidence="1">
    <location>
        <position position="74"/>
    </location>
    <ligand>
        <name>[4Fe-4S] cluster</name>
        <dbReference type="ChEBI" id="CHEBI:49883"/>
    </ligand>
</feature>
<feature type="binding site" evidence="1">
    <location>
        <position position="80"/>
    </location>
    <ligand>
        <name>[4Fe-4S] cluster</name>
        <dbReference type="ChEBI" id="CHEBI:49883"/>
    </ligand>
</feature>
<feature type="binding site" evidence="1">
    <location>
        <position position="83"/>
    </location>
    <ligand>
        <name>[4Fe-4S] cluster</name>
        <dbReference type="ChEBI" id="CHEBI:49883"/>
    </ligand>
</feature>
<feature type="binding site" evidence="1">
    <location>
        <position position="162"/>
    </location>
    <ligand>
        <name>[4Fe-4S] cluster</name>
        <dbReference type="ChEBI" id="CHEBI:49883"/>
    </ligand>
</feature>
<feature type="binding site" evidence="2">
    <location>
        <position position="286"/>
    </location>
    <ligand>
        <name>S-adenosyl-L-methionine</name>
        <dbReference type="ChEBI" id="CHEBI:59789"/>
    </ligand>
</feature>
<feature type="binding site" evidence="2">
    <location>
        <position position="315"/>
    </location>
    <ligand>
        <name>S-adenosyl-L-methionine</name>
        <dbReference type="ChEBI" id="CHEBI:59789"/>
    </ligand>
</feature>
<feature type="binding site" evidence="2">
    <location>
        <position position="336"/>
    </location>
    <ligand>
        <name>S-adenosyl-L-methionine</name>
        <dbReference type="ChEBI" id="CHEBI:59789"/>
    </ligand>
</feature>
<feature type="binding site" evidence="2">
    <location>
        <position position="384"/>
    </location>
    <ligand>
        <name>S-adenosyl-L-methionine</name>
        <dbReference type="ChEBI" id="CHEBI:59789"/>
    </ligand>
</feature>
<proteinExistence type="inferred from homology"/>
<accession>Q6G836</accession>
<gene>
    <name type="ordered locus">SAS1819</name>
</gene>
<protein>
    <recommendedName>
        <fullName>Uncharacterized RNA methyltransferase SAS1819</fullName>
        <ecNumber>2.1.1.-</ecNumber>
    </recommendedName>
</protein>
<keyword id="KW-0004">4Fe-4S</keyword>
<keyword id="KW-0408">Iron</keyword>
<keyword id="KW-0411">Iron-sulfur</keyword>
<keyword id="KW-0479">Metal-binding</keyword>
<keyword id="KW-0489">Methyltransferase</keyword>
<keyword id="KW-0949">S-adenosyl-L-methionine</keyword>
<keyword id="KW-0808">Transferase</keyword>
<organism>
    <name type="scientific">Staphylococcus aureus (strain MSSA476)</name>
    <dbReference type="NCBI Taxonomy" id="282459"/>
    <lineage>
        <taxon>Bacteria</taxon>
        <taxon>Bacillati</taxon>
        <taxon>Bacillota</taxon>
        <taxon>Bacilli</taxon>
        <taxon>Bacillales</taxon>
        <taxon>Staphylococcaceae</taxon>
        <taxon>Staphylococcus</taxon>
    </lineage>
</organism>
<name>Y1819_STAAS</name>
<comment type="similarity">
    <text evidence="2">Belongs to the class I-like SAM-binding methyltransferase superfamily. RNA M5U methyltransferase family.</text>
</comment>
<evidence type="ECO:0000250" key="1"/>
<evidence type="ECO:0000255" key="2">
    <source>
        <dbReference type="PROSITE-ProRule" id="PRU01024"/>
    </source>
</evidence>
<sequence>MQAIAKNDIKTGTVVDLTHEGHGVVKIDRFPIFIPQALINEQIEYKIIKVKKNFAIGKLLNINTRSENRVAPPCIYYERCGGCQLQHLSYEAQLEMKKEQVINLFQRKAHFDNSKINDTVGMTDPWRYRNKSQIPVGKNEQNEVIMGFYRQRSHDIIDMESCLIQDSQHQEVMNEVKSILKDLNVSIYQEQLKKGLMRHLVVRTGYHTDEMMIIFVTNGKKWPQKNAVVEKILDAFPNVTSIKQNINDSHSNVIMGRQSITLYGKDTIIDQLTDSTFKISDQSFYQINSEQTEKLYNKAIEYAQLTGNEVVLDTYCGIGTIGLYMAPHAKHVYGVEVVPSAIEDAQQNATINQCNNTTFVCGKAEEVILQWKAQGIKPDVVMVDPPRKGCDETFIQTLLTLEPKRIVYISCNPATQQRDALLLAEKYQLEEVTPVDMFPQTTHVETVALFNLK</sequence>
<dbReference type="EC" id="2.1.1.-"/>
<dbReference type="EMBL" id="BX571857">
    <property type="protein sequence ID" value="CAG43625.1"/>
    <property type="molecule type" value="Genomic_DNA"/>
</dbReference>
<dbReference type="SMR" id="Q6G836"/>
<dbReference type="KEGG" id="sas:SAS1819"/>
<dbReference type="HOGENOM" id="CLU_014689_7_0_9"/>
<dbReference type="GO" id="GO:0051539">
    <property type="term" value="F:4 iron, 4 sulfur cluster binding"/>
    <property type="evidence" value="ECO:0007669"/>
    <property type="project" value="UniProtKB-KW"/>
</dbReference>
<dbReference type="GO" id="GO:0046872">
    <property type="term" value="F:metal ion binding"/>
    <property type="evidence" value="ECO:0007669"/>
    <property type="project" value="UniProtKB-KW"/>
</dbReference>
<dbReference type="GO" id="GO:0070041">
    <property type="term" value="F:rRNA (uridine-C5-)-methyltransferase activity"/>
    <property type="evidence" value="ECO:0007669"/>
    <property type="project" value="TreeGrafter"/>
</dbReference>
<dbReference type="GO" id="GO:0070475">
    <property type="term" value="P:rRNA base methylation"/>
    <property type="evidence" value="ECO:0007669"/>
    <property type="project" value="TreeGrafter"/>
</dbReference>
<dbReference type="CDD" id="cd02440">
    <property type="entry name" value="AdoMet_MTases"/>
    <property type="match status" value="1"/>
</dbReference>
<dbReference type="FunFam" id="3.40.50.150:FF:000009">
    <property type="entry name" value="23S rRNA (Uracil(1939)-C(5))-methyltransferase RlmD"/>
    <property type="match status" value="1"/>
</dbReference>
<dbReference type="FunFam" id="2.40.50.140:FF:000097">
    <property type="entry name" value="23S rRNA (uracil(1939)-C(5))-methyltransferase RlmD"/>
    <property type="match status" value="1"/>
</dbReference>
<dbReference type="FunFam" id="2.40.50.1070:FF:000003">
    <property type="entry name" value="23S rRNA (Uracil-5-)-methyltransferase RumA"/>
    <property type="match status" value="1"/>
</dbReference>
<dbReference type="Gene3D" id="2.40.50.1070">
    <property type="match status" value="1"/>
</dbReference>
<dbReference type="Gene3D" id="2.40.50.140">
    <property type="entry name" value="Nucleic acid-binding proteins"/>
    <property type="match status" value="1"/>
</dbReference>
<dbReference type="Gene3D" id="3.40.50.150">
    <property type="entry name" value="Vaccinia Virus protein VP39"/>
    <property type="match status" value="1"/>
</dbReference>
<dbReference type="InterPro" id="IPR030390">
    <property type="entry name" value="MeTrfase_TrmA_AS"/>
</dbReference>
<dbReference type="InterPro" id="IPR030391">
    <property type="entry name" value="MeTrfase_TrmA_CS"/>
</dbReference>
<dbReference type="InterPro" id="IPR012340">
    <property type="entry name" value="NA-bd_OB-fold"/>
</dbReference>
<dbReference type="InterPro" id="IPR029063">
    <property type="entry name" value="SAM-dependent_MTases_sf"/>
</dbReference>
<dbReference type="InterPro" id="IPR010280">
    <property type="entry name" value="U5_MeTrfase_fam"/>
</dbReference>
<dbReference type="NCBIfam" id="TIGR00479">
    <property type="entry name" value="rumA"/>
    <property type="match status" value="1"/>
</dbReference>
<dbReference type="PANTHER" id="PTHR11061">
    <property type="entry name" value="RNA M5U METHYLTRANSFERASE"/>
    <property type="match status" value="1"/>
</dbReference>
<dbReference type="PANTHER" id="PTHR11061:SF30">
    <property type="entry name" value="TRNA (URACIL(54)-C(5))-METHYLTRANSFERASE"/>
    <property type="match status" value="1"/>
</dbReference>
<dbReference type="Pfam" id="PF05958">
    <property type="entry name" value="tRNA_U5-meth_tr"/>
    <property type="match status" value="1"/>
</dbReference>
<dbReference type="SUPFAM" id="SSF50249">
    <property type="entry name" value="Nucleic acid-binding proteins"/>
    <property type="match status" value="1"/>
</dbReference>
<dbReference type="SUPFAM" id="SSF53335">
    <property type="entry name" value="S-adenosyl-L-methionine-dependent methyltransferases"/>
    <property type="match status" value="1"/>
</dbReference>
<dbReference type="PROSITE" id="PS51687">
    <property type="entry name" value="SAM_MT_RNA_M5U"/>
    <property type="match status" value="1"/>
</dbReference>
<dbReference type="PROSITE" id="PS01230">
    <property type="entry name" value="TRMA_1"/>
    <property type="match status" value="1"/>
</dbReference>
<dbReference type="PROSITE" id="PS01231">
    <property type="entry name" value="TRMA_2"/>
    <property type="match status" value="1"/>
</dbReference>
<reference key="1">
    <citation type="journal article" date="2004" name="Proc. Natl. Acad. Sci. U.S.A.">
        <title>Complete genomes of two clinical Staphylococcus aureus strains: evidence for the rapid evolution of virulence and drug resistance.</title>
        <authorList>
            <person name="Holden M.T.G."/>
            <person name="Feil E.J."/>
            <person name="Lindsay J.A."/>
            <person name="Peacock S.J."/>
            <person name="Day N.P.J."/>
            <person name="Enright M.C."/>
            <person name="Foster T.J."/>
            <person name="Moore C.E."/>
            <person name="Hurst L."/>
            <person name="Atkin R."/>
            <person name="Barron A."/>
            <person name="Bason N."/>
            <person name="Bentley S.D."/>
            <person name="Chillingworth C."/>
            <person name="Chillingworth T."/>
            <person name="Churcher C."/>
            <person name="Clark L."/>
            <person name="Corton C."/>
            <person name="Cronin A."/>
            <person name="Doggett J."/>
            <person name="Dowd L."/>
            <person name="Feltwell T."/>
            <person name="Hance Z."/>
            <person name="Harris B."/>
            <person name="Hauser H."/>
            <person name="Holroyd S."/>
            <person name="Jagels K."/>
            <person name="James K.D."/>
            <person name="Lennard N."/>
            <person name="Line A."/>
            <person name="Mayes R."/>
            <person name="Moule S."/>
            <person name="Mungall K."/>
            <person name="Ormond D."/>
            <person name="Quail M.A."/>
            <person name="Rabbinowitsch E."/>
            <person name="Rutherford K.M."/>
            <person name="Sanders M."/>
            <person name="Sharp S."/>
            <person name="Simmonds M."/>
            <person name="Stevens K."/>
            <person name="Whitehead S."/>
            <person name="Barrell B.G."/>
            <person name="Spratt B.G."/>
            <person name="Parkhill J."/>
        </authorList>
    </citation>
    <scope>NUCLEOTIDE SEQUENCE [LARGE SCALE GENOMIC DNA]</scope>
    <source>
        <strain>MSSA476</strain>
    </source>
</reference>